<gene>
    <name evidence="1" type="primary">rpmB</name>
    <name type="ordered locus">ABAYE3325</name>
</gene>
<comment type="similarity">
    <text evidence="1">Belongs to the bacterial ribosomal protein bL28 family.</text>
</comment>
<protein>
    <recommendedName>
        <fullName evidence="1">Large ribosomal subunit protein bL28</fullName>
    </recommendedName>
    <alternativeName>
        <fullName evidence="2">50S ribosomal protein L28</fullName>
    </alternativeName>
</protein>
<name>RL28_ACIBY</name>
<keyword id="KW-0687">Ribonucleoprotein</keyword>
<keyword id="KW-0689">Ribosomal protein</keyword>
<sequence length="78" mass="9104">MSKVCQVTGKRPVVGNNVSHANNKTKRRFEPNLHHHRFWLESEKRFVRLRLTTKGMRIIDKLGIEKVVADLRAQGQKI</sequence>
<organism>
    <name type="scientific">Acinetobacter baumannii (strain AYE)</name>
    <dbReference type="NCBI Taxonomy" id="509173"/>
    <lineage>
        <taxon>Bacteria</taxon>
        <taxon>Pseudomonadati</taxon>
        <taxon>Pseudomonadota</taxon>
        <taxon>Gammaproteobacteria</taxon>
        <taxon>Moraxellales</taxon>
        <taxon>Moraxellaceae</taxon>
        <taxon>Acinetobacter</taxon>
        <taxon>Acinetobacter calcoaceticus/baumannii complex</taxon>
    </lineage>
</organism>
<evidence type="ECO:0000255" key="1">
    <source>
        <dbReference type="HAMAP-Rule" id="MF_00373"/>
    </source>
</evidence>
<evidence type="ECO:0000305" key="2"/>
<dbReference type="EMBL" id="CU459141">
    <property type="protein sequence ID" value="CAM88123.1"/>
    <property type="molecule type" value="Genomic_DNA"/>
</dbReference>
<dbReference type="RefSeq" id="WP_000048256.1">
    <property type="nucleotide sequence ID" value="NZ_JBDGFB010000003.1"/>
</dbReference>
<dbReference type="SMR" id="B0V4N1"/>
<dbReference type="EnsemblBacteria" id="CAM88123">
    <property type="protein sequence ID" value="CAM88123"/>
    <property type="gene ID" value="ABAYE3325"/>
</dbReference>
<dbReference type="GeneID" id="97177253"/>
<dbReference type="KEGG" id="aby:ABAYE3325"/>
<dbReference type="HOGENOM" id="CLU_064548_3_1_6"/>
<dbReference type="GO" id="GO:0022625">
    <property type="term" value="C:cytosolic large ribosomal subunit"/>
    <property type="evidence" value="ECO:0007669"/>
    <property type="project" value="TreeGrafter"/>
</dbReference>
<dbReference type="GO" id="GO:0003735">
    <property type="term" value="F:structural constituent of ribosome"/>
    <property type="evidence" value="ECO:0007669"/>
    <property type="project" value="InterPro"/>
</dbReference>
<dbReference type="GO" id="GO:0006412">
    <property type="term" value="P:translation"/>
    <property type="evidence" value="ECO:0007669"/>
    <property type="project" value="UniProtKB-UniRule"/>
</dbReference>
<dbReference type="FunFam" id="2.30.170.40:FF:000001">
    <property type="entry name" value="50S ribosomal protein L28"/>
    <property type="match status" value="1"/>
</dbReference>
<dbReference type="Gene3D" id="2.30.170.40">
    <property type="entry name" value="Ribosomal protein L28/L24"/>
    <property type="match status" value="1"/>
</dbReference>
<dbReference type="HAMAP" id="MF_00373">
    <property type="entry name" value="Ribosomal_bL28"/>
    <property type="match status" value="1"/>
</dbReference>
<dbReference type="InterPro" id="IPR026569">
    <property type="entry name" value="Ribosomal_bL28"/>
</dbReference>
<dbReference type="InterPro" id="IPR034704">
    <property type="entry name" value="Ribosomal_bL28/bL31-like_sf"/>
</dbReference>
<dbReference type="InterPro" id="IPR001383">
    <property type="entry name" value="Ribosomal_bL28_bact-type"/>
</dbReference>
<dbReference type="InterPro" id="IPR037147">
    <property type="entry name" value="Ribosomal_bL28_sf"/>
</dbReference>
<dbReference type="NCBIfam" id="TIGR00009">
    <property type="entry name" value="L28"/>
    <property type="match status" value="1"/>
</dbReference>
<dbReference type="PANTHER" id="PTHR13528">
    <property type="entry name" value="39S RIBOSOMAL PROTEIN L28, MITOCHONDRIAL"/>
    <property type="match status" value="1"/>
</dbReference>
<dbReference type="PANTHER" id="PTHR13528:SF2">
    <property type="entry name" value="LARGE RIBOSOMAL SUBUNIT PROTEIN BL28M"/>
    <property type="match status" value="1"/>
</dbReference>
<dbReference type="Pfam" id="PF00830">
    <property type="entry name" value="Ribosomal_L28"/>
    <property type="match status" value="1"/>
</dbReference>
<dbReference type="SUPFAM" id="SSF143800">
    <property type="entry name" value="L28p-like"/>
    <property type="match status" value="1"/>
</dbReference>
<reference key="1">
    <citation type="journal article" date="2008" name="PLoS ONE">
        <title>Comparative analysis of Acinetobacters: three genomes for three lifestyles.</title>
        <authorList>
            <person name="Vallenet D."/>
            <person name="Nordmann P."/>
            <person name="Barbe V."/>
            <person name="Poirel L."/>
            <person name="Mangenot S."/>
            <person name="Bataille E."/>
            <person name="Dossat C."/>
            <person name="Gas S."/>
            <person name="Kreimeyer A."/>
            <person name="Lenoble P."/>
            <person name="Oztas S."/>
            <person name="Poulain J."/>
            <person name="Segurens B."/>
            <person name="Robert C."/>
            <person name="Abergel C."/>
            <person name="Claverie J.-M."/>
            <person name="Raoult D."/>
            <person name="Medigue C."/>
            <person name="Weissenbach J."/>
            <person name="Cruveiller S."/>
        </authorList>
    </citation>
    <scope>NUCLEOTIDE SEQUENCE [LARGE SCALE GENOMIC DNA]</scope>
    <source>
        <strain>AYE</strain>
    </source>
</reference>
<feature type="chain" id="PRO_1000121570" description="Large ribosomal subunit protein bL28">
    <location>
        <begin position="1"/>
        <end position="78"/>
    </location>
</feature>
<proteinExistence type="inferred from homology"/>
<accession>B0V4N1</accession>